<dbReference type="EMBL" id="CP001229">
    <property type="protein sequence ID" value="ACN99330.1"/>
    <property type="molecule type" value="Genomic_DNA"/>
</dbReference>
<dbReference type="RefSeq" id="WP_012674648.1">
    <property type="nucleotide sequence ID" value="NC_012438.1"/>
</dbReference>
<dbReference type="SMR" id="C1DXS9"/>
<dbReference type="STRING" id="204536.SULAZ_0194"/>
<dbReference type="KEGG" id="saf:SULAZ_0194"/>
<dbReference type="eggNOG" id="COG0779">
    <property type="taxonomic scope" value="Bacteria"/>
</dbReference>
<dbReference type="HOGENOM" id="CLU_070525_2_2_0"/>
<dbReference type="OrthoDB" id="9805006at2"/>
<dbReference type="Proteomes" id="UP000001369">
    <property type="component" value="Chromosome"/>
</dbReference>
<dbReference type="GO" id="GO:0005829">
    <property type="term" value="C:cytosol"/>
    <property type="evidence" value="ECO:0007669"/>
    <property type="project" value="TreeGrafter"/>
</dbReference>
<dbReference type="GO" id="GO:0000028">
    <property type="term" value="P:ribosomal small subunit assembly"/>
    <property type="evidence" value="ECO:0007669"/>
    <property type="project" value="TreeGrafter"/>
</dbReference>
<dbReference type="GO" id="GO:0006412">
    <property type="term" value="P:translation"/>
    <property type="evidence" value="ECO:0007669"/>
    <property type="project" value="TreeGrafter"/>
</dbReference>
<dbReference type="CDD" id="cd01734">
    <property type="entry name" value="YlxS_C"/>
    <property type="match status" value="1"/>
</dbReference>
<dbReference type="FunFam" id="3.30.300.70:FF:000001">
    <property type="entry name" value="Ribosome maturation factor RimP"/>
    <property type="match status" value="1"/>
</dbReference>
<dbReference type="Gene3D" id="2.30.30.180">
    <property type="entry name" value="Ribosome maturation factor RimP, C-terminal domain"/>
    <property type="match status" value="1"/>
</dbReference>
<dbReference type="Gene3D" id="3.30.300.70">
    <property type="entry name" value="RimP-like superfamily, N-terminal"/>
    <property type="match status" value="1"/>
</dbReference>
<dbReference type="HAMAP" id="MF_01077">
    <property type="entry name" value="RimP"/>
    <property type="match status" value="1"/>
</dbReference>
<dbReference type="InterPro" id="IPR003728">
    <property type="entry name" value="Ribosome_maturation_RimP"/>
</dbReference>
<dbReference type="InterPro" id="IPR028998">
    <property type="entry name" value="RimP_C"/>
</dbReference>
<dbReference type="InterPro" id="IPR036847">
    <property type="entry name" value="RimP_C_sf"/>
</dbReference>
<dbReference type="InterPro" id="IPR028989">
    <property type="entry name" value="RimP_N"/>
</dbReference>
<dbReference type="InterPro" id="IPR035956">
    <property type="entry name" value="RimP_N_sf"/>
</dbReference>
<dbReference type="PANTHER" id="PTHR33867">
    <property type="entry name" value="RIBOSOME MATURATION FACTOR RIMP"/>
    <property type="match status" value="1"/>
</dbReference>
<dbReference type="PANTHER" id="PTHR33867:SF1">
    <property type="entry name" value="RIBOSOME MATURATION FACTOR RIMP"/>
    <property type="match status" value="1"/>
</dbReference>
<dbReference type="Pfam" id="PF17384">
    <property type="entry name" value="DUF150_C"/>
    <property type="match status" value="1"/>
</dbReference>
<dbReference type="Pfam" id="PF02576">
    <property type="entry name" value="RimP_N"/>
    <property type="match status" value="1"/>
</dbReference>
<dbReference type="SUPFAM" id="SSF74942">
    <property type="entry name" value="YhbC-like, C-terminal domain"/>
    <property type="match status" value="1"/>
</dbReference>
<dbReference type="SUPFAM" id="SSF75420">
    <property type="entry name" value="YhbC-like, N-terminal domain"/>
    <property type="match status" value="1"/>
</dbReference>
<organism>
    <name type="scientific">Sulfurihydrogenibium azorense (strain DSM 15241 / OCM 825 / Az-Fu1)</name>
    <dbReference type="NCBI Taxonomy" id="204536"/>
    <lineage>
        <taxon>Bacteria</taxon>
        <taxon>Pseudomonadati</taxon>
        <taxon>Aquificota</taxon>
        <taxon>Aquificia</taxon>
        <taxon>Aquificales</taxon>
        <taxon>Hydrogenothermaceae</taxon>
        <taxon>Sulfurihydrogenibium</taxon>
    </lineage>
</organism>
<sequence>MKLEEKVKELLSPILEDRGLKLVDIEYITGKRPVLRIYIYNPEGTSIDDCEYVSQRIGSILDVEDLIKTSYTLEVSSPGLDRKFKNIEEYNIFKGKDVVVKTKEPIEDKKIFKGILEGLEDGIVKLKQDNIVVEIPLDKISQTKLDF</sequence>
<comment type="function">
    <text evidence="1">Required for maturation of 30S ribosomal subunits.</text>
</comment>
<comment type="subcellular location">
    <subcellularLocation>
        <location evidence="1">Cytoplasm</location>
    </subcellularLocation>
</comment>
<comment type="similarity">
    <text evidence="1">Belongs to the RimP family.</text>
</comment>
<accession>C1DXS9</accession>
<proteinExistence type="inferred from homology"/>
<gene>
    <name evidence="1" type="primary">rimP</name>
    <name type="ordered locus">SULAZ_0194</name>
</gene>
<name>RIMP_SULAA</name>
<keyword id="KW-0963">Cytoplasm</keyword>
<keyword id="KW-1185">Reference proteome</keyword>
<keyword id="KW-0690">Ribosome biogenesis</keyword>
<feature type="chain" id="PRO_0000384789" description="Ribosome maturation factor RimP">
    <location>
        <begin position="1"/>
        <end position="147"/>
    </location>
</feature>
<evidence type="ECO:0000255" key="1">
    <source>
        <dbReference type="HAMAP-Rule" id="MF_01077"/>
    </source>
</evidence>
<reference key="1">
    <citation type="journal article" date="2009" name="J. Bacteriol.">
        <title>Complete and draft genome sequences of six members of the Aquificales.</title>
        <authorList>
            <person name="Reysenbach A.-L."/>
            <person name="Hamamura N."/>
            <person name="Podar M."/>
            <person name="Griffiths E."/>
            <person name="Ferreira S."/>
            <person name="Hochstein R."/>
            <person name="Heidelberg J."/>
            <person name="Johnson J."/>
            <person name="Mead D."/>
            <person name="Pohorille A."/>
            <person name="Sarmiento M."/>
            <person name="Schweighofer K."/>
            <person name="Seshadri R."/>
            <person name="Voytek M.A."/>
        </authorList>
    </citation>
    <scope>NUCLEOTIDE SEQUENCE [LARGE SCALE GENOMIC DNA]</scope>
    <source>
        <strain>DSM 15241 / OCM 825 / Az-Fu1</strain>
    </source>
</reference>
<protein>
    <recommendedName>
        <fullName evidence="1">Ribosome maturation factor RimP</fullName>
    </recommendedName>
</protein>